<reference key="1">
    <citation type="journal article" date="1998" name="Science">
        <title>Zebrafish hox clusters and vertebrate genome evolution.</title>
        <authorList>
            <person name="Amores A."/>
            <person name="Force A."/>
            <person name="Yan Y.-L."/>
            <person name="Joly L."/>
            <person name="Amemiya C."/>
            <person name="Fritz A."/>
            <person name="Ho R.K."/>
            <person name="Langeland J."/>
            <person name="Prince V.E."/>
            <person name="Wang Y.-L."/>
            <person name="Westerfield M."/>
            <person name="Ekker M."/>
            <person name="Postlethwait J.H."/>
        </authorList>
    </citation>
    <scope>NUCLEOTIDE SEQUENCE [GENOMIC DNA]</scope>
</reference>
<reference key="2">
    <citation type="journal article" date="2013" name="Nature">
        <title>The zebrafish reference genome sequence and its relationship to the human genome.</title>
        <authorList>
            <person name="Howe K."/>
            <person name="Clark M.D."/>
            <person name="Torroja C.F."/>
            <person name="Torrance J."/>
            <person name="Berthelot C."/>
            <person name="Muffato M."/>
            <person name="Collins J.E."/>
            <person name="Humphray S."/>
            <person name="McLaren K."/>
            <person name="Matthews L."/>
            <person name="McLaren S."/>
            <person name="Sealy I."/>
            <person name="Caccamo M."/>
            <person name="Churcher C."/>
            <person name="Scott C."/>
            <person name="Barrett J.C."/>
            <person name="Koch R."/>
            <person name="Rauch G.J."/>
            <person name="White S."/>
            <person name="Chow W."/>
            <person name="Kilian B."/>
            <person name="Quintais L.T."/>
            <person name="Guerra-Assuncao J.A."/>
            <person name="Zhou Y."/>
            <person name="Gu Y."/>
            <person name="Yen J."/>
            <person name="Vogel J.H."/>
            <person name="Eyre T."/>
            <person name="Redmond S."/>
            <person name="Banerjee R."/>
            <person name="Chi J."/>
            <person name="Fu B."/>
            <person name="Langley E."/>
            <person name="Maguire S.F."/>
            <person name="Laird G.K."/>
            <person name="Lloyd D."/>
            <person name="Kenyon E."/>
            <person name="Donaldson S."/>
            <person name="Sehra H."/>
            <person name="Almeida-King J."/>
            <person name="Loveland J."/>
            <person name="Trevanion S."/>
            <person name="Jones M."/>
            <person name="Quail M."/>
            <person name="Willey D."/>
            <person name="Hunt A."/>
            <person name="Burton J."/>
            <person name="Sims S."/>
            <person name="McLay K."/>
            <person name="Plumb B."/>
            <person name="Davis J."/>
            <person name="Clee C."/>
            <person name="Oliver K."/>
            <person name="Clark R."/>
            <person name="Riddle C."/>
            <person name="Elliot D."/>
            <person name="Threadgold G."/>
            <person name="Harden G."/>
            <person name="Ware D."/>
            <person name="Begum S."/>
            <person name="Mortimore B."/>
            <person name="Kerry G."/>
            <person name="Heath P."/>
            <person name="Phillimore B."/>
            <person name="Tracey A."/>
            <person name="Corby N."/>
            <person name="Dunn M."/>
            <person name="Johnson C."/>
            <person name="Wood J."/>
            <person name="Clark S."/>
            <person name="Pelan S."/>
            <person name="Griffiths G."/>
            <person name="Smith M."/>
            <person name="Glithero R."/>
            <person name="Howden P."/>
            <person name="Barker N."/>
            <person name="Lloyd C."/>
            <person name="Stevens C."/>
            <person name="Harley J."/>
            <person name="Holt K."/>
            <person name="Panagiotidis G."/>
            <person name="Lovell J."/>
            <person name="Beasley H."/>
            <person name="Henderson C."/>
            <person name="Gordon D."/>
            <person name="Auger K."/>
            <person name="Wright D."/>
            <person name="Collins J."/>
            <person name="Raisen C."/>
            <person name="Dyer L."/>
            <person name="Leung K."/>
            <person name="Robertson L."/>
            <person name="Ambridge K."/>
            <person name="Leongamornlert D."/>
            <person name="McGuire S."/>
            <person name="Gilderthorp R."/>
            <person name="Griffiths C."/>
            <person name="Manthravadi D."/>
            <person name="Nichol S."/>
            <person name="Barker G."/>
            <person name="Whitehead S."/>
            <person name="Kay M."/>
            <person name="Brown J."/>
            <person name="Murnane C."/>
            <person name="Gray E."/>
            <person name="Humphries M."/>
            <person name="Sycamore N."/>
            <person name="Barker D."/>
            <person name="Saunders D."/>
            <person name="Wallis J."/>
            <person name="Babbage A."/>
            <person name="Hammond S."/>
            <person name="Mashreghi-Mohammadi M."/>
            <person name="Barr L."/>
            <person name="Martin S."/>
            <person name="Wray P."/>
            <person name="Ellington A."/>
            <person name="Matthews N."/>
            <person name="Ellwood M."/>
            <person name="Woodmansey R."/>
            <person name="Clark G."/>
            <person name="Cooper J."/>
            <person name="Tromans A."/>
            <person name="Grafham D."/>
            <person name="Skuce C."/>
            <person name="Pandian R."/>
            <person name="Andrews R."/>
            <person name="Harrison E."/>
            <person name="Kimberley A."/>
            <person name="Garnett J."/>
            <person name="Fosker N."/>
            <person name="Hall R."/>
            <person name="Garner P."/>
            <person name="Kelly D."/>
            <person name="Bird C."/>
            <person name="Palmer S."/>
            <person name="Gehring I."/>
            <person name="Berger A."/>
            <person name="Dooley C.M."/>
            <person name="Ersan-Urun Z."/>
            <person name="Eser C."/>
            <person name="Geiger H."/>
            <person name="Geisler M."/>
            <person name="Karotki L."/>
            <person name="Kirn A."/>
            <person name="Konantz J."/>
            <person name="Konantz M."/>
            <person name="Oberlander M."/>
            <person name="Rudolph-Geiger S."/>
            <person name="Teucke M."/>
            <person name="Lanz C."/>
            <person name="Raddatz G."/>
            <person name="Osoegawa K."/>
            <person name="Zhu B."/>
            <person name="Rapp A."/>
            <person name="Widaa S."/>
            <person name="Langford C."/>
            <person name="Yang F."/>
            <person name="Schuster S.C."/>
            <person name="Carter N.P."/>
            <person name="Harrow J."/>
            <person name="Ning Z."/>
            <person name="Herrero J."/>
            <person name="Searle S.M."/>
            <person name="Enright A."/>
            <person name="Geisler R."/>
            <person name="Plasterk R.H."/>
            <person name="Lee C."/>
            <person name="Westerfield M."/>
            <person name="de Jong P.J."/>
            <person name="Zon L.I."/>
            <person name="Postlethwait J.H."/>
            <person name="Nusslein-Volhard C."/>
            <person name="Hubbard T.J."/>
            <person name="Roest Crollius H."/>
            <person name="Rogers J."/>
            <person name="Stemple D.L."/>
        </authorList>
    </citation>
    <scope>NUCLEOTIDE SEQUENCE [LARGE SCALE GENOMIC DNA]</scope>
    <source>
        <strain>Tuebingen</strain>
    </source>
</reference>
<reference key="3">
    <citation type="journal article" date="1988" name="Gene">
        <title>Structure and neural expression of a zebrafish homeobox sequence.</title>
        <authorList>
            <person name="Njoelstad P.R."/>
            <person name="Molven A."/>
            <person name="Eiken H.G."/>
            <person name="Fjose A."/>
        </authorList>
    </citation>
    <scope>NUCLEOTIDE SEQUENCE [GENOMIC DNA] OF 142-227</scope>
</reference>
<reference key="4">
    <citation type="journal article" date="1998" name="Development">
        <title>Zebrafish hox genes: expression in the hindbrain region of wild-type and mutants of the segmentation gene, valentino.</title>
        <authorList>
            <person name="Prince V.E."/>
            <person name="Moens C.B."/>
            <person name="Kimmel C.B."/>
            <person name="Ho R.K."/>
        </authorList>
    </citation>
    <scope>NUCLEOTIDE SEQUENCE [MRNA] OF 185-246</scope>
    <scope>DEVELOPMENTAL STAGE</scope>
    <source>
        <tissue>Embryo</tissue>
    </source>
</reference>
<reference key="5">
    <citation type="journal article" date="1998" name="Development">
        <title>Zebrafish hox genes: genomic organization and modified colinear expression patterns in the trunk.</title>
        <authorList>
            <person name="Prince V.E."/>
            <person name="Joly L."/>
            <person name="Ekker M."/>
            <person name="Ho R.K."/>
        </authorList>
    </citation>
    <scope>DEVELOPMENTAL STAGE</scope>
</reference>
<gene>
    <name type="primary">hoxb4a</name>
    <name type="synonym">hox-b4</name>
    <name type="synonym">hoxb4</name>
    <name type="synonym">zf13</name>
</gene>
<name>HXB4A_DANRE</name>
<evidence type="ECO:0000255" key="1">
    <source>
        <dbReference type="PROSITE-ProRule" id="PRU00108"/>
    </source>
</evidence>
<evidence type="ECO:0000256" key="2">
    <source>
        <dbReference type="SAM" id="MobiDB-lite"/>
    </source>
</evidence>
<evidence type="ECO:0000269" key="3">
    <source>
    </source>
</evidence>
<evidence type="ECO:0000269" key="4">
    <source>
    </source>
</evidence>
<evidence type="ECO:0000305" key="5"/>
<sequence length="246" mass="27704">MAMSSYLINSNYVDPKFPPCEEYSQSDYLPSHSPDYYSAQRQDPSFQHESIYHQRSGCADPPYSSCQGPGQPAAVISPRGHVLPTTALSTPLPEPSHHCDSVTPSPPPACGQTPTSQNTSTVSSRKDPVVYPWMKKVHVNIVSPNYSGGEPKRSRTAYTRQQVLELEKEFHYNRYLTRRRRVEIAHTLCLSERQIKIWFQNRRMKWKKDHKLPNTKIRSNSASTNSSGCPTLCSNQSRASGPPPSL</sequence>
<keyword id="KW-0217">Developmental protein</keyword>
<keyword id="KW-0238">DNA-binding</keyword>
<keyword id="KW-0371">Homeobox</keyword>
<keyword id="KW-0539">Nucleus</keyword>
<keyword id="KW-1185">Reference proteome</keyword>
<keyword id="KW-0804">Transcription</keyword>
<keyword id="KW-0805">Transcription regulation</keyword>
<protein>
    <recommendedName>
        <fullName>Homeobox protein Hox-B4a</fullName>
        <shortName>Hox-B4</shortName>
    </recommendedName>
    <alternativeName>
        <fullName>Homeobox protein Zf-13</fullName>
    </alternativeName>
</protein>
<accession>P22574</accession>
<accession>O42369</accession>
<accession>Q8AWY6</accession>
<accession>Q9PWL9</accession>
<comment type="function">
    <text>Sequence-specific transcription factor which is part of a developmental regulatory system that provides cells with specific positional identities on the anterior-posterior axis.</text>
</comment>
<comment type="subcellular location">
    <subcellularLocation>
        <location>Nucleus</location>
    </subcellularLocation>
</comment>
<comment type="developmental stage">
    <text evidence="3 4">First expressed at the 1-somite stage with an anterior expression limit in rhombomere 7 (r7) of the developing hindbrain. By the 15-somite stage, the anterior expression limit is at the r6/r7 boundary and this is maintained until at least 30 hours of development. At the 10-somite stage, weakly expressed in the paraxial mesoderm with an anterior expression limit at somite 1.</text>
</comment>
<comment type="similarity">
    <text evidence="5">Belongs to the Antp homeobox family. Deformed subfamily.</text>
</comment>
<comment type="sequence caution" evidence="5">
    <conflict type="erroneous gene model prediction">
        <sequence resource="EMBL-CDS" id="AAA56866"/>
    </conflict>
</comment>
<comment type="sequence caution" evidence="5">
    <conflict type="erroneous initiation">
        <sequence resource="EMBL-CDS" id="CAD59115"/>
    </conflict>
</comment>
<feature type="chain" id="PRO_0000200125" description="Homeobox protein Hox-B4a">
    <location>
        <begin position="1"/>
        <end position="246"/>
    </location>
</feature>
<feature type="DNA-binding region" description="Homeobox" evidence="1">
    <location>
        <begin position="151"/>
        <end position="210"/>
    </location>
</feature>
<feature type="region of interest" description="Disordered" evidence="2">
    <location>
        <begin position="23"/>
        <end position="125"/>
    </location>
</feature>
<feature type="region of interest" description="Disordered" evidence="2">
    <location>
        <begin position="210"/>
        <end position="246"/>
    </location>
</feature>
<feature type="short sequence motif" description="Antp-type hexapeptide">
    <location>
        <begin position="130"/>
        <end position="135"/>
    </location>
</feature>
<feature type="compositionally biased region" description="Polar residues" evidence="2">
    <location>
        <begin position="39"/>
        <end position="48"/>
    </location>
</feature>
<feature type="compositionally biased region" description="Polar residues" evidence="2">
    <location>
        <begin position="112"/>
        <end position="123"/>
    </location>
</feature>
<feature type="compositionally biased region" description="Polar residues" evidence="2">
    <location>
        <begin position="216"/>
        <end position="239"/>
    </location>
</feature>
<proteinExistence type="evidence at transcript level"/>
<dbReference type="EMBL" id="AF071252">
    <property type="protein sequence ID" value="AAD15945.1"/>
    <property type="molecule type" value="Genomic_DNA"/>
</dbReference>
<dbReference type="EMBL" id="AL645782">
    <property type="protein sequence ID" value="CAD59115.1"/>
    <property type="status" value="ALT_INIT"/>
    <property type="molecule type" value="Genomic_DNA"/>
</dbReference>
<dbReference type="EMBL" id="M24085">
    <property type="protein sequence ID" value="AAA56866.1"/>
    <property type="status" value="ALT_SEQ"/>
    <property type="molecule type" value="Genomic_DNA"/>
</dbReference>
<dbReference type="EMBL" id="Y13946">
    <property type="protein sequence ID" value="CAA74284.1"/>
    <property type="molecule type" value="mRNA"/>
</dbReference>
<dbReference type="PIR" id="JT0489">
    <property type="entry name" value="JT0489"/>
</dbReference>
<dbReference type="RefSeq" id="NP_571193.1">
    <property type="nucleotide sequence ID" value="NM_131118.2"/>
</dbReference>
<dbReference type="SMR" id="P22574"/>
<dbReference type="FunCoup" id="P22574">
    <property type="interactions" value="332"/>
</dbReference>
<dbReference type="STRING" id="7955.ENSDARP00000008458"/>
<dbReference type="PaxDb" id="7955-ENSDARP00000008458"/>
<dbReference type="Ensembl" id="ENSDART00000012470">
    <property type="protein sequence ID" value="ENSDARP00000008458"/>
    <property type="gene ID" value="ENSDARG00000013533"/>
</dbReference>
<dbReference type="GeneID" id="30340"/>
<dbReference type="KEGG" id="dre:30340"/>
<dbReference type="AGR" id="ZFIN:ZDB-GENE-990415-105"/>
<dbReference type="CTD" id="30340"/>
<dbReference type="ZFIN" id="ZDB-GENE-990415-105">
    <property type="gene designation" value="hoxb4a"/>
</dbReference>
<dbReference type="eggNOG" id="KOG0489">
    <property type="taxonomic scope" value="Eukaryota"/>
</dbReference>
<dbReference type="HOGENOM" id="CLU_061398_0_0_1"/>
<dbReference type="InParanoid" id="P22574"/>
<dbReference type="OMA" id="EPPYTQC"/>
<dbReference type="OrthoDB" id="6159439at2759"/>
<dbReference type="PhylomeDB" id="P22574"/>
<dbReference type="TreeFam" id="TF352857"/>
<dbReference type="PRO" id="PR:P22574"/>
<dbReference type="Proteomes" id="UP000000437">
    <property type="component" value="Chromosome 3"/>
</dbReference>
<dbReference type="Bgee" id="ENSDARG00000013533">
    <property type="expression patterns" value="Expressed in presumptive rhombomere 7 and 39 other cell types or tissues"/>
</dbReference>
<dbReference type="ExpressionAtlas" id="P22574">
    <property type="expression patterns" value="baseline"/>
</dbReference>
<dbReference type="GO" id="GO:0005654">
    <property type="term" value="C:nucleoplasm"/>
    <property type="evidence" value="ECO:0000318"/>
    <property type="project" value="GO_Central"/>
</dbReference>
<dbReference type="GO" id="GO:0000981">
    <property type="term" value="F:DNA-binding transcription factor activity, RNA polymerase II-specific"/>
    <property type="evidence" value="ECO:0000318"/>
    <property type="project" value="GO_Central"/>
</dbReference>
<dbReference type="GO" id="GO:0000978">
    <property type="term" value="F:RNA polymerase II cis-regulatory region sequence-specific DNA binding"/>
    <property type="evidence" value="ECO:0000318"/>
    <property type="project" value="GO_Central"/>
</dbReference>
<dbReference type="GO" id="GO:0009952">
    <property type="term" value="P:anterior/posterior pattern specification"/>
    <property type="evidence" value="ECO:0000318"/>
    <property type="project" value="GO_Central"/>
</dbReference>
<dbReference type="GO" id="GO:0048704">
    <property type="term" value="P:embryonic skeletal system morphogenesis"/>
    <property type="evidence" value="ECO:0000318"/>
    <property type="project" value="GO_Central"/>
</dbReference>
<dbReference type="GO" id="GO:0045944">
    <property type="term" value="P:positive regulation of transcription by RNA polymerase II"/>
    <property type="evidence" value="ECO:0000318"/>
    <property type="project" value="GO_Central"/>
</dbReference>
<dbReference type="CDD" id="cd00086">
    <property type="entry name" value="homeodomain"/>
    <property type="match status" value="1"/>
</dbReference>
<dbReference type="FunFam" id="1.10.10.60:FF:000029">
    <property type="entry name" value="Homeobox protein Hox-D4"/>
    <property type="match status" value="1"/>
</dbReference>
<dbReference type="Gene3D" id="1.10.10.60">
    <property type="entry name" value="Homeodomain-like"/>
    <property type="match status" value="1"/>
</dbReference>
<dbReference type="InterPro" id="IPR050609">
    <property type="entry name" value="Antp_homeobox_Deformed_sf"/>
</dbReference>
<dbReference type="InterPro" id="IPR001356">
    <property type="entry name" value="HD"/>
</dbReference>
<dbReference type="InterPro" id="IPR020479">
    <property type="entry name" value="HD_metazoa"/>
</dbReference>
<dbReference type="InterPro" id="IPR017995">
    <property type="entry name" value="Homeobox_antennapedia"/>
</dbReference>
<dbReference type="InterPro" id="IPR001827">
    <property type="entry name" value="Homeobox_Antennapedia_CS"/>
</dbReference>
<dbReference type="InterPro" id="IPR017970">
    <property type="entry name" value="Homeobox_CS"/>
</dbReference>
<dbReference type="InterPro" id="IPR009057">
    <property type="entry name" value="Homeodomain-like_sf"/>
</dbReference>
<dbReference type="PANTHER" id="PTHR45771:SF3">
    <property type="entry name" value="HOMEOBOX PROTEIN HOX-B4"/>
    <property type="match status" value="1"/>
</dbReference>
<dbReference type="PANTHER" id="PTHR45771">
    <property type="entry name" value="HOMEOTIC PROTEIN DEFORMED"/>
    <property type="match status" value="1"/>
</dbReference>
<dbReference type="Pfam" id="PF00046">
    <property type="entry name" value="Homeodomain"/>
    <property type="match status" value="1"/>
</dbReference>
<dbReference type="PRINTS" id="PR00025">
    <property type="entry name" value="ANTENNAPEDIA"/>
</dbReference>
<dbReference type="PRINTS" id="PR00024">
    <property type="entry name" value="HOMEOBOX"/>
</dbReference>
<dbReference type="SMART" id="SM00389">
    <property type="entry name" value="HOX"/>
    <property type="match status" value="1"/>
</dbReference>
<dbReference type="SUPFAM" id="SSF46689">
    <property type="entry name" value="Homeodomain-like"/>
    <property type="match status" value="1"/>
</dbReference>
<dbReference type="PROSITE" id="PS00032">
    <property type="entry name" value="ANTENNAPEDIA"/>
    <property type="match status" value="1"/>
</dbReference>
<dbReference type="PROSITE" id="PS00027">
    <property type="entry name" value="HOMEOBOX_1"/>
    <property type="match status" value="1"/>
</dbReference>
<dbReference type="PROSITE" id="PS50071">
    <property type="entry name" value="HOMEOBOX_2"/>
    <property type="match status" value="1"/>
</dbReference>
<organism>
    <name type="scientific">Danio rerio</name>
    <name type="common">Zebrafish</name>
    <name type="synonym">Brachydanio rerio</name>
    <dbReference type="NCBI Taxonomy" id="7955"/>
    <lineage>
        <taxon>Eukaryota</taxon>
        <taxon>Metazoa</taxon>
        <taxon>Chordata</taxon>
        <taxon>Craniata</taxon>
        <taxon>Vertebrata</taxon>
        <taxon>Euteleostomi</taxon>
        <taxon>Actinopterygii</taxon>
        <taxon>Neopterygii</taxon>
        <taxon>Teleostei</taxon>
        <taxon>Ostariophysi</taxon>
        <taxon>Cypriniformes</taxon>
        <taxon>Danionidae</taxon>
        <taxon>Danioninae</taxon>
        <taxon>Danio</taxon>
    </lineage>
</organism>